<reference key="1">
    <citation type="submission" date="1999-03" db="EMBL/GenBank/DDBJ databases">
        <authorList>
            <person name="Ohta T."/>
            <person name="Kudo N."/>
            <person name="Ariyasu H."/>
            <person name="Yanai Y."/>
            <person name="Takeuchi M."/>
            <person name="Ikegami H."/>
            <person name="Kurimoto M."/>
        </authorList>
    </citation>
    <scope>NUCLEOTIDE SEQUENCE</scope>
    <source>
        <strain>ddY</strain>
        <tissue>Intestinal mucosa</tissue>
    </source>
</reference>
<reference key="2">
    <citation type="journal article" date="2005" name="Science">
        <title>The transcriptional landscape of the mammalian genome.</title>
        <authorList>
            <person name="Carninci P."/>
            <person name="Kasukawa T."/>
            <person name="Katayama S."/>
            <person name="Gough J."/>
            <person name="Frith M.C."/>
            <person name="Maeda N."/>
            <person name="Oyama R."/>
            <person name="Ravasi T."/>
            <person name="Lenhard B."/>
            <person name="Wells C."/>
            <person name="Kodzius R."/>
            <person name="Shimokawa K."/>
            <person name="Bajic V.B."/>
            <person name="Brenner S.E."/>
            <person name="Batalov S."/>
            <person name="Forrest A.R."/>
            <person name="Zavolan M."/>
            <person name="Davis M.J."/>
            <person name="Wilming L.G."/>
            <person name="Aidinis V."/>
            <person name="Allen J.E."/>
            <person name="Ambesi-Impiombato A."/>
            <person name="Apweiler R."/>
            <person name="Aturaliya R.N."/>
            <person name="Bailey T.L."/>
            <person name="Bansal M."/>
            <person name="Baxter L."/>
            <person name="Beisel K.W."/>
            <person name="Bersano T."/>
            <person name="Bono H."/>
            <person name="Chalk A.M."/>
            <person name="Chiu K.P."/>
            <person name="Choudhary V."/>
            <person name="Christoffels A."/>
            <person name="Clutterbuck D.R."/>
            <person name="Crowe M.L."/>
            <person name="Dalla E."/>
            <person name="Dalrymple B.P."/>
            <person name="de Bono B."/>
            <person name="Della Gatta G."/>
            <person name="di Bernardo D."/>
            <person name="Down T."/>
            <person name="Engstrom P."/>
            <person name="Fagiolini M."/>
            <person name="Faulkner G."/>
            <person name="Fletcher C.F."/>
            <person name="Fukushima T."/>
            <person name="Furuno M."/>
            <person name="Futaki S."/>
            <person name="Gariboldi M."/>
            <person name="Georgii-Hemming P."/>
            <person name="Gingeras T.R."/>
            <person name="Gojobori T."/>
            <person name="Green R.E."/>
            <person name="Gustincich S."/>
            <person name="Harbers M."/>
            <person name="Hayashi Y."/>
            <person name="Hensch T.K."/>
            <person name="Hirokawa N."/>
            <person name="Hill D."/>
            <person name="Huminiecki L."/>
            <person name="Iacono M."/>
            <person name="Ikeo K."/>
            <person name="Iwama A."/>
            <person name="Ishikawa T."/>
            <person name="Jakt M."/>
            <person name="Kanapin A."/>
            <person name="Katoh M."/>
            <person name="Kawasawa Y."/>
            <person name="Kelso J."/>
            <person name="Kitamura H."/>
            <person name="Kitano H."/>
            <person name="Kollias G."/>
            <person name="Krishnan S.P."/>
            <person name="Kruger A."/>
            <person name="Kummerfeld S.K."/>
            <person name="Kurochkin I.V."/>
            <person name="Lareau L.F."/>
            <person name="Lazarevic D."/>
            <person name="Lipovich L."/>
            <person name="Liu J."/>
            <person name="Liuni S."/>
            <person name="McWilliam S."/>
            <person name="Madan Babu M."/>
            <person name="Madera M."/>
            <person name="Marchionni L."/>
            <person name="Matsuda H."/>
            <person name="Matsuzawa S."/>
            <person name="Miki H."/>
            <person name="Mignone F."/>
            <person name="Miyake S."/>
            <person name="Morris K."/>
            <person name="Mottagui-Tabar S."/>
            <person name="Mulder N."/>
            <person name="Nakano N."/>
            <person name="Nakauchi H."/>
            <person name="Ng P."/>
            <person name="Nilsson R."/>
            <person name="Nishiguchi S."/>
            <person name="Nishikawa S."/>
            <person name="Nori F."/>
            <person name="Ohara O."/>
            <person name="Okazaki Y."/>
            <person name="Orlando V."/>
            <person name="Pang K.C."/>
            <person name="Pavan W.J."/>
            <person name="Pavesi G."/>
            <person name="Pesole G."/>
            <person name="Petrovsky N."/>
            <person name="Piazza S."/>
            <person name="Reed J."/>
            <person name="Reid J.F."/>
            <person name="Ring B.Z."/>
            <person name="Ringwald M."/>
            <person name="Rost B."/>
            <person name="Ruan Y."/>
            <person name="Salzberg S.L."/>
            <person name="Sandelin A."/>
            <person name="Schneider C."/>
            <person name="Schoenbach C."/>
            <person name="Sekiguchi K."/>
            <person name="Semple C.A."/>
            <person name="Seno S."/>
            <person name="Sessa L."/>
            <person name="Sheng Y."/>
            <person name="Shibata Y."/>
            <person name="Shimada H."/>
            <person name="Shimada K."/>
            <person name="Silva D."/>
            <person name="Sinclair B."/>
            <person name="Sperling S."/>
            <person name="Stupka E."/>
            <person name="Sugiura K."/>
            <person name="Sultana R."/>
            <person name="Takenaka Y."/>
            <person name="Taki K."/>
            <person name="Tammoja K."/>
            <person name="Tan S.L."/>
            <person name="Tang S."/>
            <person name="Taylor M.S."/>
            <person name="Tegner J."/>
            <person name="Teichmann S.A."/>
            <person name="Ueda H.R."/>
            <person name="van Nimwegen E."/>
            <person name="Verardo R."/>
            <person name="Wei C.L."/>
            <person name="Yagi K."/>
            <person name="Yamanishi H."/>
            <person name="Zabarovsky E."/>
            <person name="Zhu S."/>
            <person name="Zimmer A."/>
            <person name="Hide W."/>
            <person name="Bult C."/>
            <person name="Grimmond S.M."/>
            <person name="Teasdale R.D."/>
            <person name="Liu E.T."/>
            <person name="Brusic V."/>
            <person name="Quackenbush J."/>
            <person name="Wahlestedt C."/>
            <person name="Mattick J.S."/>
            <person name="Hume D.A."/>
            <person name="Kai C."/>
            <person name="Sasaki D."/>
            <person name="Tomaru Y."/>
            <person name="Fukuda S."/>
            <person name="Kanamori-Katayama M."/>
            <person name="Suzuki M."/>
            <person name="Aoki J."/>
            <person name="Arakawa T."/>
            <person name="Iida J."/>
            <person name="Imamura K."/>
            <person name="Itoh M."/>
            <person name="Kato T."/>
            <person name="Kawaji H."/>
            <person name="Kawagashira N."/>
            <person name="Kawashima T."/>
            <person name="Kojima M."/>
            <person name="Kondo S."/>
            <person name="Konno H."/>
            <person name="Nakano K."/>
            <person name="Ninomiya N."/>
            <person name="Nishio T."/>
            <person name="Okada M."/>
            <person name="Plessy C."/>
            <person name="Shibata K."/>
            <person name="Shiraki T."/>
            <person name="Suzuki S."/>
            <person name="Tagami M."/>
            <person name="Waki K."/>
            <person name="Watahiki A."/>
            <person name="Okamura-Oho Y."/>
            <person name="Suzuki H."/>
            <person name="Kawai J."/>
            <person name="Hayashizaki Y."/>
        </authorList>
    </citation>
    <scope>NUCLEOTIDE SEQUENCE [LARGE SCALE MRNA]</scope>
    <source>
        <strain>C57BL/6J</strain>
        <tissue>Stomach</tissue>
    </source>
</reference>
<reference key="3">
    <citation type="journal article" date="2001" name="Gene">
        <title>Cloning, characterization and mapping of the mouse trehalase (Treh) gene.</title>
        <authorList>
            <person name="Oesterreicher T.J."/>
            <person name="Markesich D.C."/>
            <person name="Henning S.J."/>
        </authorList>
    </citation>
    <scope>NUCLEOTIDE SEQUENCE [GENOMIC DNA] OF 28-576</scope>
    <source>
        <strain>129/SvJ</strain>
    </source>
</reference>
<reference key="4">
    <citation type="journal article" date="2010" name="Cell">
        <title>A tissue-specific atlas of mouse protein phosphorylation and expression.</title>
        <authorList>
            <person name="Huttlin E.L."/>
            <person name="Jedrychowski M.P."/>
            <person name="Elias J.E."/>
            <person name="Goswami T."/>
            <person name="Rad R."/>
            <person name="Beausoleil S.A."/>
            <person name="Villen J."/>
            <person name="Haas W."/>
            <person name="Sowa M.E."/>
            <person name="Gygi S.P."/>
        </authorList>
    </citation>
    <scope>IDENTIFICATION BY MASS SPECTROMETRY [LARGE SCALE ANALYSIS]</scope>
    <source>
        <tissue>Kidney</tissue>
    </source>
</reference>
<keyword id="KW-1003">Cell membrane</keyword>
<keyword id="KW-1015">Disulfide bond</keyword>
<keyword id="KW-0325">Glycoprotein</keyword>
<keyword id="KW-0326">Glycosidase</keyword>
<keyword id="KW-0336">GPI-anchor</keyword>
<keyword id="KW-0378">Hydrolase</keyword>
<keyword id="KW-0449">Lipoprotein</keyword>
<keyword id="KW-0472">Membrane</keyword>
<keyword id="KW-1185">Reference proteome</keyword>
<keyword id="KW-0732">Signal</keyword>
<feature type="signal peptide" evidence="4">
    <location>
        <begin position="1"/>
        <end position="20"/>
    </location>
</feature>
<feature type="chain" id="PRO_0000012053" description="Trehalase">
    <location>
        <begin position="21"/>
        <end position="553"/>
    </location>
</feature>
<feature type="propeptide" id="PRO_0000012054" description="Removed in mature form" evidence="4">
    <location>
        <begin position="554"/>
        <end position="576"/>
    </location>
</feature>
<feature type="active site" description="Proton donor/acceptor" evidence="2">
    <location>
        <position position="318"/>
    </location>
</feature>
<feature type="active site" description="Proton donor/acceptor" evidence="2">
    <location>
        <position position="511"/>
    </location>
</feature>
<feature type="binding site" evidence="2">
    <location>
        <position position="165"/>
    </location>
    <ligand>
        <name>substrate</name>
    </ligand>
</feature>
<feature type="binding site" evidence="2">
    <location>
        <begin position="172"/>
        <end position="173"/>
    </location>
    <ligand>
        <name>substrate</name>
    </ligand>
</feature>
<feature type="binding site" evidence="2">
    <location>
        <position position="209"/>
    </location>
    <ligand>
        <name>substrate</name>
    </ligand>
</feature>
<feature type="binding site" evidence="2">
    <location>
        <begin position="218"/>
        <end position="220"/>
    </location>
    <ligand>
        <name>substrate</name>
    </ligand>
</feature>
<feature type="binding site" evidence="2">
    <location>
        <begin position="283"/>
        <end position="285"/>
    </location>
    <ligand>
        <name>substrate</name>
    </ligand>
</feature>
<feature type="binding site" evidence="2">
    <location>
        <position position="316"/>
    </location>
    <ligand>
        <name>substrate</name>
    </ligand>
</feature>
<feature type="binding site" evidence="2">
    <location>
        <position position="526"/>
    </location>
    <ligand>
        <name>substrate</name>
    </ligand>
</feature>
<feature type="lipid moiety-binding region" description="GPI-anchor amidated serine" evidence="4">
    <location>
        <position position="553"/>
    </location>
</feature>
<feature type="glycosylation site" description="N-linked (GlcNAc...) asparagine" evidence="5">
    <location>
        <position position="75"/>
    </location>
</feature>
<feature type="glycosylation site" description="N-linked (GlcNAc...) asparagine" evidence="5">
    <location>
        <position position="258"/>
    </location>
</feature>
<feature type="glycosylation site" description="N-linked (GlcNAc...) asparagine" evidence="5">
    <location>
        <position position="366"/>
    </location>
</feature>
<feature type="sequence conflict" description="In Ref. 3; AAK97631." evidence="7" ref="3">
    <original>Q</original>
    <variation>R</variation>
    <location>
        <position position="82"/>
    </location>
</feature>
<feature type="sequence conflict" description="In Ref. 3; AAK97631." evidence="7" ref="3">
    <original>S</original>
    <variation>T</variation>
    <location>
        <position position="416"/>
    </location>
</feature>
<organism>
    <name type="scientific">Mus musculus</name>
    <name type="common">Mouse</name>
    <dbReference type="NCBI Taxonomy" id="10090"/>
    <lineage>
        <taxon>Eukaryota</taxon>
        <taxon>Metazoa</taxon>
        <taxon>Chordata</taxon>
        <taxon>Craniata</taxon>
        <taxon>Vertebrata</taxon>
        <taxon>Euteleostomi</taxon>
        <taxon>Mammalia</taxon>
        <taxon>Eutheria</taxon>
        <taxon>Euarchontoglires</taxon>
        <taxon>Glires</taxon>
        <taxon>Rodentia</taxon>
        <taxon>Myomorpha</taxon>
        <taxon>Muroidea</taxon>
        <taxon>Muridae</taxon>
        <taxon>Murinae</taxon>
        <taxon>Mus</taxon>
        <taxon>Mus</taxon>
    </lineage>
</organism>
<protein>
    <recommendedName>
        <fullName evidence="6">Trehalase</fullName>
        <ecNumber evidence="1">3.2.1.28</ecNumber>
    </recommendedName>
    <alternativeName>
        <fullName>Alpha,alpha-trehalase</fullName>
    </alternativeName>
    <alternativeName>
        <fullName>Alpha,alpha-trehalose glucohydrolase</fullName>
    </alternativeName>
</protein>
<accession>Q9JLT2</accession>
<accession>Q91ZS4</accession>
<dbReference type="EC" id="3.2.1.28" evidence="1"/>
<dbReference type="EMBL" id="AF136944">
    <property type="protein sequence ID" value="AAF61430.1"/>
    <property type="molecule type" value="mRNA"/>
</dbReference>
<dbReference type="EMBL" id="AK008912">
    <property type="protein sequence ID" value="BAB25963.1"/>
    <property type="molecule type" value="mRNA"/>
</dbReference>
<dbReference type="EMBL" id="AF404760">
    <property type="protein sequence ID" value="AAK97631.1"/>
    <property type="molecule type" value="Genomic_DNA"/>
</dbReference>
<dbReference type="CCDS" id="CCDS23117.1"/>
<dbReference type="RefSeq" id="NP_067456.1">
    <property type="nucleotide sequence ID" value="NM_021481.3"/>
</dbReference>
<dbReference type="SMR" id="Q9JLT2"/>
<dbReference type="FunCoup" id="Q9JLT2">
    <property type="interactions" value="69"/>
</dbReference>
<dbReference type="STRING" id="10090.ENSMUSP00000034609"/>
<dbReference type="CAZy" id="GH37">
    <property type="family name" value="Glycoside Hydrolase Family 37"/>
</dbReference>
<dbReference type="GlyCosmos" id="Q9JLT2">
    <property type="glycosylation" value="3 sites, No reported glycans"/>
</dbReference>
<dbReference type="GlyGen" id="Q9JLT2">
    <property type="glycosylation" value="3 sites"/>
</dbReference>
<dbReference type="iPTMnet" id="Q9JLT2"/>
<dbReference type="PhosphoSitePlus" id="Q9JLT2"/>
<dbReference type="jPOST" id="Q9JLT2"/>
<dbReference type="PaxDb" id="10090-ENSMUSP00000034609"/>
<dbReference type="PeptideAtlas" id="Q9JLT2"/>
<dbReference type="ProteomicsDB" id="259310"/>
<dbReference type="Antibodypedia" id="48758">
    <property type="antibodies" value="112 antibodies from 19 providers"/>
</dbReference>
<dbReference type="DNASU" id="58866"/>
<dbReference type="Ensembl" id="ENSMUST00000034609.11">
    <property type="protein sequence ID" value="ENSMUSP00000034609.5"/>
    <property type="gene ID" value="ENSMUSG00000032098.14"/>
</dbReference>
<dbReference type="GeneID" id="58866"/>
<dbReference type="KEGG" id="mmu:58866"/>
<dbReference type="UCSC" id="uc009pec.2">
    <property type="organism name" value="mouse"/>
</dbReference>
<dbReference type="AGR" id="MGI:1926230"/>
<dbReference type="CTD" id="11181"/>
<dbReference type="MGI" id="MGI:1926230">
    <property type="gene designation" value="Treh"/>
</dbReference>
<dbReference type="VEuPathDB" id="HostDB:ENSMUSG00000032098"/>
<dbReference type="eggNOG" id="KOG0602">
    <property type="taxonomic scope" value="Eukaryota"/>
</dbReference>
<dbReference type="GeneTree" id="ENSGT00390000006949"/>
<dbReference type="HOGENOM" id="CLU_006451_4_3_1"/>
<dbReference type="InParanoid" id="Q9JLT2"/>
<dbReference type="OMA" id="RYWDASD"/>
<dbReference type="OrthoDB" id="3542292at2759"/>
<dbReference type="PhylomeDB" id="Q9JLT2"/>
<dbReference type="TreeFam" id="TF314239"/>
<dbReference type="BRENDA" id="3.2.1.28">
    <property type="organism ID" value="3474"/>
</dbReference>
<dbReference type="BioGRID-ORCS" id="58866">
    <property type="hits" value="4 hits in 78 CRISPR screens"/>
</dbReference>
<dbReference type="PRO" id="PR:Q9JLT2"/>
<dbReference type="Proteomes" id="UP000000589">
    <property type="component" value="Chromosome 9"/>
</dbReference>
<dbReference type="RNAct" id="Q9JLT2">
    <property type="molecule type" value="protein"/>
</dbReference>
<dbReference type="Bgee" id="ENSMUSG00000032098">
    <property type="expression patterns" value="Expressed in small intestine Peyer's patch and 31 other cell types or tissues"/>
</dbReference>
<dbReference type="ExpressionAtlas" id="Q9JLT2">
    <property type="expression patterns" value="baseline and differential"/>
</dbReference>
<dbReference type="GO" id="GO:0005903">
    <property type="term" value="C:brush border"/>
    <property type="evidence" value="ECO:0000304"/>
    <property type="project" value="MGI"/>
</dbReference>
<dbReference type="GO" id="GO:0016020">
    <property type="term" value="C:membrane"/>
    <property type="evidence" value="ECO:0000250"/>
    <property type="project" value="UniProtKB"/>
</dbReference>
<dbReference type="GO" id="GO:0005886">
    <property type="term" value="C:plasma membrane"/>
    <property type="evidence" value="ECO:0007669"/>
    <property type="project" value="UniProtKB-SubCell"/>
</dbReference>
<dbReference type="GO" id="GO:0098552">
    <property type="term" value="C:side of membrane"/>
    <property type="evidence" value="ECO:0007669"/>
    <property type="project" value="UniProtKB-KW"/>
</dbReference>
<dbReference type="GO" id="GO:0004555">
    <property type="term" value="F:alpha,alpha-trehalase activity"/>
    <property type="evidence" value="ECO:0000250"/>
    <property type="project" value="UniProtKB"/>
</dbReference>
<dbReference type="GO" id="GO:0009887">
    <property type="term" value="P:animal organ morphogenesis"/>
    <property type="evidence" value="ECO:0007669"/>
    <property type="project" value="Ensembl"/>
</dbReference>
<dbReference type="GO" id="GO:0005993">
    <property type="term" value="P:trehalose catabolic process"/>
    <property type="evidence" value="ECO:0000250"/>
    <property type="project" value="UniProtKB"/>
</dbReference>
<dbReference type="FunFam" id="1.50.10.10:FF:000034">
    <property type="entry name" value="Trehalase"/>
    <property type="match status" value="1"/>
</dbReference>
<dbReference type="Gene3D" id="1.50.10.10">
    <property type="match status" value="1"/>
</dbReference>
<dbReference type="InterPro" id="IPR008928">
    <property type="entry name" value="6-hairpin_glycosidase_sf"/>
</dbReference>
<dbReference type="InterPro" id="IPR012341">
    <property type="entry name" value="6hp_glycosidase-like_sf"/>
</dbReference>
<dbReference type="InterPro" id="IPR001661">
    <property type="entry name" value="Glyco_hydro_37"/>
</dbReference>
<dbReference type="InterPro" id="IPR018232">
    <property type="entry name" value="Glyco_hydro_37_CS"/>
</dbReference>
<dbReference type="PANTHER" id="PTHR23403">
    <property type="entry name" value="TREHALASE"/>
    <property type="match status" value="1"/>
</dbReference>
<dbReference type="PANTHER" id="PTHR23403:SF1">
    <property type="entry name" value="TREHALASE"/>
    <property type="match status" value="1"/>
</dbReference>
<dbReference type="Pfam" id="PF01204">
    <property type="entry name" value="Trehalase"/>
    <property type="match status" value="1"/>
</dbReference>
<dbReference type="PRINTS" id="PR00744">
    <property type="entry name" value="GLHYDRLASE37"/>
</dbReference>
<dbReference type="SUPFAM" id="SSF48208">
    <property type="entry name" value="Six-hairpin glycosidases"/>
    <property type="match status" value="1"/>
</dbReference>
<dbReference type="PROSITE" id="PS00927">
    <property type="entry name" value="TREHALASE_1"/>
    <property type="match status" value="1"/>
</dbReference>
<dbReference type="PROSITE" id="PS00928">
    <property type="entry name" value="TREHALASE_2"/>
    <property type="match status" value="1"/>
</dbReference>
<proteinExistence type="evidence at protein level"/>
<comment type="function">
    <text evidence="1">Intestinal trehalase is probably involved in the hydrolysis of ingested trehalose.</text>
</comment>
<comment type="catalytic activity">
    <reaction evidence="1">
        <text>alpha,alpha-trehalose + H2O = alpha-D-glucose + beta-D-glucose</text>
        <dbReference type="Rhea" id="RHEA:32675"/>
        <dbReference type="ChEBI" id="CHEBI:15377"/>
        <dbReference type="ChEBI" id="CHEBI:15903"/>
        <dbReference type="ChEBI" id="CHEBI:16551"/>
        <dbReference type="ChEBI" id="CHEBI:17925"/>
        <dbReference type="EC" id="3.2.1.28"/>
    </reaction>
</comment>
<comment type="subunit">
    <text evidence="3">Homodimer; disulfide-linked.</text>
</comment>
<comment type="subcellular location">
    <subcellularLocation>
        <location evidence="3">Cell membrane</location>
        <topology evidence="3">Lipid-anchor</topology>
        <topology evidence="3">GPI-anchor</topology>
    </subcellularLocation>
</comment>
<comment type="similarity">
    <text evidence="7">Belongs to the glycosyl hydrolase 37 family.</text>
</comment>
<name>TREA_MOUSE</name>
<sequence>MTWELHLLLLLGLGLRSQEALPPPCESQIYCHGELLHQVQMAQLYQDDKQFVDMSLATSPDEVLQKFSELATVHNHSIPKEQLQEFVQSHFQPVGQELQSWTPEDWKDSPQFLQKISDANLRVWAEELHKIWKKLGKKMKAEVLSYPERSSLIYSKHPFIVPGGRFVEFYYWDSYWVMEGLLLSEMASTVKGMLQNFLDLVKTYGHIPNGGRIYYLQRSQPPLLTLMMDRYVAHTKDVAFLQENIGTLASELDFWTVNRTVSVVSGGQSYVLNRYYVPYGGPRPESYRKDAELANSVPEGDRETLWAELKAGAESGWDFSSRWLVGGPDPDLLSSIRTSKMVPADLNAFLCQAEELMSNFYSRLGNDTEATKYRNLRAQRLAAMEAVLWDEQKGAWFDYDLEKGKKNLEFYPSNLSPLWAGCFSDPSVADKALKYLEDSKILTYQYGIPTSLRNTGQQWDFPNAWAPLQDLVIRGLAKSASPRTQEVAFQLAQNWIKTNFKVYSQKSAMFEKYDISNGGHPGGGGEYEVQEGFGWTNGLALMLLDRYGDQLTSGTQLASLGPHCLVAALLLSLLLQ</sequence>
<evidence type="ECO:0000250" key="1">
    <source>
        <dbReference type="UniProtKB" id="O43280"/>
    </source>
</evidence>
<evidence type="ECO:0000250" key="2">
    <source>
        <dbReference type="UniProtKB" id="P13482"/>
    </source>
</evidence>
<evidence type="ECO:0000250" key="3">
    <source>
        <dbReference type="UniProtKB" id="P19813"/>
    </source>
</evidence>
<evidence type="ECO:0000255" key="4"/>
<evidence type="ECO:0000255" key="5">
    <source>
        <dbReference type="PROSITE-ProRule" id="PRU00498"/>
    </source>
</evidence>
<evidence type="ECO:0000303" key="6">
    <source>
    </source>
</evidence>
<evidence type="ECO:0000305" key="7"/>
<evidence type="ECO:0000312" key="8">
    <source>
        <dbReference type="MGI" id="MGI:1926230"/>
    </source>
</evidence>
<gene>
    <name evidence="8" type="primary">Treh</name>
</gene>